<dbReference type="EMBL" id="CP000683">
    <property type="protein sequence ID" value="ABV84498.1"/>
    <property type="status" value="ALT_INIT"/>
    <property type="molecule type" value="Genomic_DNA"/>
</dbReference>
<dbReference type="RefSeq" id="WP_041404511.1">
    <property type="nucleotide sequence ID" value="NC_009900.1"/>
</dbReference>
<dbReference type="SMR" id="A8F0R2"/>
<dbReference type="KEGG" id="rms:RMA_0204"/>
<dbReference type="HOGENOM" id="CLU_073981_2_1_5"/>
<dbReference type="Proteomes" id="UP000001311">
    <property type="component" value="Chromosome"/>
</dbReference>
<dbReference type="GO" id="GO:0005829">
    <property type="term" value="C:cytosol"/>
    <property type="evidence" value="ECO:0007669"/>
    <property type="project" value="GOC"/>
</dbReference>
<dbReference type="GO" id="GO:0043023">
    <property type="term" value="F:ribosomal large subunit binding"/>
    <property type="evidence" value="ECO:0007669"/>
    <property type="project" value="TreeGrafter"/>
</dbReference>
<dbReference type="GO" id="GO:0002184">
    <property type="term" value="P:cytoplasmic translational termination"/>
    <property type="evidence" value="ECO:0007669"/>
    <property type="project" value="TreeGrafter"/>
</dbReference>
<dbReference type="CDD" id="cd00520">
    <property type="entry name" value="RRF"/>
    <property type="match status" value="1"/>
</dbReference>
<dbReference type="FunFam" id="1.10.132.20:FF:000001">
    <property type="entry name" value="Ribosome-recycling factor"/>
    <property type="match status" value="1"/>
</dbReference>
<dbReference type="FunFam" id="3.30.1360.40:FF:000001">
    <property type="entry name" value="Ribosome-recycling factor"/>
    <property type="match status" value="1"/>
</dbReference>
<dbReference type="Gene3D" id="3.30.1360.40">
    <property type="match status" value="1"/>
</dbReference>
<dbReference type="Gene3D" id="1.10.132.20">
    <property type="entry name" value="Ribosome-recycling factor"/>
    <property type="match status" value="1"/>
</dbReference>
<dbReference type="HAMAP" id="MF_00040">
    <property type="entry name" value="RRF"/>
    <property type="match status" value="1"/>
</dbReference>
<dbReference type="InterPro" id="IPR002661">
    <property type="entry name" value="Ribosome_recyc_fac"/>
</dbReference>
<dbReference type="InterPro" id="IPR023584">
    <property type="entry name" value="Ribosome_recyc_fac_dom"/>
</dbReference>
<dbReference type="InterPro" id="IPR036191">
    <property type="entry name" value="RRF_sf"/>
</dbReference>
<dbReference type="NCBIfam" id="TIGR00496">
    <property type="entry name" value="frr"/>
    <property type="match status" value="1"/>
</dbReference>
<dbReference type="PANTHER" id="PTHR20982:SF3">
    <property type="entry name" value="MITOCHONDRIAL RIBOSOME RECYCLING FACTOR PSEUDO 1"/>
    <property type="match status" value="1"/>
</dbReference>
<dbReference type="PANTHER" id="PTHR20982">
    <property type="entry name" value="RIBOSOME RECYCLING FACTOR"/>
    <property type="match status" value="1"/>
</dbReference>
<dbReference type="Pfam" id="PF01765">
    <property type="entry name" value="RRF"/>
    <property type="match status" value="1"/>
</dbReference>
<dbReference type="SUPFAM" id="SSF55194">
    <property type="entry name" value="Ribosome recycling factor, RRF"/>
    <property type="match status" value="1"/>
</dbReference>
<keyword id="KW-0963">Cytoplasm</keyword>
<keyword id="KW-0648">Protein biosynthesis</keyword>
<feature type="chain" id="PRO_0000341038" description="Ribosome-recycling factor">
    <location>
        <begin position="1"/>
        <end position="186"/>
    </location>
</feature>
<protein>
    <recommendedName>
        <fullName evidence="1">Ribosome-recycling factor</fullName>
        <shortName evidence="1">RRF</shortName>
    </recommendedName>
    <alternativeName>
        <fullName evidence="1">Ribosome-releasing factor</fullName>
    </alternativeName>
</protein>
<evidence type="ECO:0000255" key="1">
    <source>
        <dbReference type="HAMAP-Rule" id="MF_00040"/>
    </source>
</evidence>
<evidence type="ECO:0000305" key="2"/>
<comment type="function">
    <text evidence="1">Responsible for the release of ribosomes from messenger RNA at the termination of protein biosynthesis. May increase the efficiency of translation by recycling ribosomes from one round of translation to another.</text>
</comment>
<comment type="subcellular location">
    <subcellularLocation>
        <location evidence="1">Cytoplasm</location>
    </subcellularLocation>
</comment>
<comment type="similarity">
    <text evidence="1">Belongs to the RRF family.</text>
</comment>
<comment type="sequence caution" evidence="2">
    <conflict type="erroneous initiation">
        <sequence resource="EMBL-CDS" id="ABV84498"/>
    </conflict>
</comment>
<name>RRF_RICM5</name>
<proteinExistence type="inferred from homology"/>
<reference key="1">
    <citation type="journal article" date="2007" name="Genome Res.">
        <title>Lateral gene transfer between obligate intracellular bacteria: evidence from the Rickettsia massiliae genome.</title>
        <authorList>
            <person name="Blanc G."/>
            <person name="Ogata H."/>
            <person name="Robert C."/>
            <person name="Audic S."/>
            <person name="Claverie J.-M."/>
            <person name="Raoult D."/>
        </authorList>
    </citation>
    <scope>NUCLEOTIDE SEQUENCE [LARGE SCALE GENOMIC DNA]</scope>
    <source>
        <strain>Mtu5</strain>
    </source>
</reference>
<sequence length="186" mass="20927">MDKEHLKKNLQGKMEKALKVLDHELKGLRTGRASINLLDSVTVEAYGSKMPLSQVASLSTPDARTINVQVWDKSMVSSVEKGITIANLGLTPATDGQLIRLPIPTLTEERRQELVKLAHKYGEDTKISLRNIRRDGNEELKKLEKDNVIAKDEHHSLSEQVQKLTDDYSSKVDSVIKQKEQEIMTV</sequence>
<gene>
    <name evidence="1" type="primary">frr</name>
    <name type="ordered locus">RMA_0204</name>
</gene>
<accession>A8F0R2</accession>
<organism>
    <name type="scientific">Rickettsia massiliae (strain Mtu5)</name>
    <dbReference type="NCBI Taxonomy" id="416276"/>
    <lineage>
        <taxon>Bacteria</taxon>
        <taxon>Pseudomonadati</taxon>
        <taxon>Pseudomonadota</taxon>
        <taxon>Alphaproteobacteria</taxon>
        <taxon>Rickettsiales</taxon>
        <taxon>Rickettsiaceae</taxon>
        <taxon>Rickettsieae</taxon>
        <taxon>Rickettsia</taxon>
        <taxon>spotted fever group</taxon>
    </lineage>
</organism>